<evidence type="ECO:0000269" key="1">
    <source>
    </source>
</evidence>
<evidence type="ECO:0000303" key="2">
    <source>
    </source>
</evidence>
<evidence type="ECO:0000305" key="3"/>
<keyword id="KW-0903">Direct protein sequencing</keyword>
<keyword id="KW-0964">Secreted</keyword>
<keyword id="KW-0800">Toxin</keyword>
<dbReference type="GO" id="GO:0005576">
    <property type="term" value="C:extracellular region"/>
    <property type="evidence" value="ECO:0007005"/>
    <property type="project" value="UniProtKB"/>
</dbReference>
<dbReference type="GO" id="GO:0090729">
    <property type="term" value="F:toxin activity"/>
    <property type="evidence" value="ECO:0007669"/>
    <property type="project" value="UniProtKB-KW"/>
</dbReference>
<accession>P84676</accession>
<comment type="subcellular location">
    <subcellularLocation>
        <location evidence="1">Secreted</location>
    </subcellularLocation>
</comment>
<comment type="tissue specificity">
    <text evidence="1">Expressed by the venom gland.</text>
</comment>
<comment type="mass spectrometry"/>
<comment type="miscellaneous">
    <text evidence="3">The primary structure of the mature peptide is identical to that of cryptide TyPep-5 from Tityus serrulatus (AC P0DRE0).</text>
</comment>
<sequence>DEGPKSDCKP</sequence>
<proteinExistence type="evidence at protein level"/>
<feature type="chain" id="PRO_0000066798" description="Cryptide To27">
    <location>
        <begin position="1"/>
        <end position="10" status="greater than"/>
    </location>
</feature>
<feature type="non-terminal residue" evidence="2">
    <location>
        <position position="10"/>
    </location>
</feature>
<protein>
    <recommendedName>
        <fullName evidence="3">Cryptide To27</fullName>
    </recommendedName>
    <alternativeName>
        <fullName>Toxin Tc27</fullName>
    </alternativeName>
</protein>
<reference evidence="3" key="1">
    <citation type="journal article" date="2004" name="J. Chromatogr. B">
        <title>Proteomics of the venom from the Amazonian scorpion Tityus cambridgei and the role of prolines on mass spectrometry analysis of toxins.</title>
        <authorList>
            <person name="Batista C.V.F."/>
            <person name="del Pozo L."/>
            <person name="Zamudio F.Z."/>
            <person name="Contreras S."/>
            <person name="Becerril B."/>
            <person name="Wanke E."/>
            <person name="Possani L.D."/>
        </authorList>
    </citation>
    <scope>PROTEIN SEQUENCE</scope>
    <scope>SUBCELLULAR LOCATION</scope>
    <scope>TISSUE SPECIFICITY</scope>
    <scope>MASS SPECTROMETRY</scope>
    <source>
        <tissue evidence="1">Venom</tissue>
    </source>
</reference>
<name>SC27_TITOB</name>
<organism>
    <name type="scientific">Tityus obscurus</name>
    <name type="common">Amazonian scorpion</name>
    <name type="synonym">Tityus cambridgei</name>
    <dbReference type="NCBI Taxonomy" id="1221240"/>
    <lineage>
        <taxon>Eukaryota</taxon>
        <taxon>Metazoa</taxon>
        <taxon>Ecdysozoa</taxon>
        <taxon>Arthropoda</taxon>
        <taxon>Chelicerata</taxon>
        <taxon>Arachnida</taxon>
        <taxon>Scorpiones</taxon>
        <taxon>Buthida</taxon>
        <taxon>Buthoidea</taxon>
        <taxon>Buthidae</taxon>
        <taxon>Tityus</taxon>
    </lineage>
</organism>